<name>MCD1_CAEEL</name>
<gene>
    <name evidence="6" type="primary">mcd-1</name>
    <name evidence="6" type="ORF">Y51H1A.6</name>
</gene>
<dbReference type="EMBL" id="BX284602">
    <property type="protein sequence ID" value="CAT01087.1"/>
    <property type="molecule type" value="Genomic_DNA"/>
</dbReference>
<dbReference type="EMBL" id="BX284602">
    <property type="protein sequence ID" value="CAT01089.1"/>
    <property type="molecule type" value="Genomic_DNA"/>
</dbReference>
<dbReference type="RefSeq" id="NP_001254412.1">
    <molecule id="B7FAS0-1"/>
    <property type="nucleotide sequence ID" value="NM_001267483.3"/>
</dbReference>
<dbReference type="RefSeq" id="NP_001254413.1">
    <molecule id="B7FAS0-2"/>
    <property type="nucleotide sequence ID" value="NM_001267484.3"/>
</dbReference>
<dbReference type="FunCoup" id="B7FAS0">
    <property type="interactions" value="1576"/>
</dbReference>
<dbReference type="STRING" id="6239.Y51H1A.6a.1"/>
<dbReference type="PaxDb" id="6239-Y51H1A.6a"/>
<dbReference type="PeptideAtlas" id="B7FAS0"/>
<dbReference type="EnsemblMetazoa" id="Y51H1A.6a.1">
    <molecule id="B7FAS0-1"/>
    <property type="protein sequence ID" value="Y51H1A.6a.1"/>
    <property type="gene ID" value="WBGene00013096"/>
</dbReference>
<dbReference type="EnsemblMetazoa" id="Y51H1A.6b.1">
    <molecule id="B7FAS0-2"/>
    <property type="protein sequence ID" value="Y51H1A.6b.1"/>
    <property type="gene ID" value="WBGene00013096"/>
</dbReference>
<dbReference type="GeneID" id="175040"/>
<dbReference type="KEGG" id="cel:CELE_Y51H1A.6"/>
<dbReference type="AGR" id="WB:WBGene00013096"/>
<dbReference type="CTD" id="175040"/>
<dbReference type="WormBase" id="Y51H1A.6a">
    <molecule id="B7FAS0-1"/>
    <property type="protein sequence ID" value="CE43312"/>
    <property type="gene ID" value="WBGene00013096"/>
    <property type="gene designation" value="mcd-1"/>
</dbReference>
<dbReference type="WormBase" id="Y51H1A.6b">
    <molecule id="B7FAS0-2"/>
    <property type="protein sequence ID" value="CE43386"/>
    <property type="gene ID" value="WBGene00013096"/>
    <property type="gene designation" value="mcd-1"/>
</dbReference>
<dbReference type="eggNOG" id="ENOG502TI5V">
    <property type="taxonomic scope" value="Eukaryota"/>
</dbReference>
<dbReference type="HOGENOM" id="CLU_311977_0_0_1"/>
<dbReference type="InParanoid" id="B7FAS0"/>
<dbReference type="OMA" id="QHIHYDG"/>
<dbReference type="OrthoDB" id="5868857at2759"/>
<dbReference type="PRO" id="PR:B7FAS0"/>
<dbReference type="Proteomes" id="UP000001940">
    <property type="component" value="Chromosome II"/>
</dbReference>
<dbReference type="Bgee" id="WBGene00013096">
    <property type="expression patterns" value="Expressed in embryo and 4 other cell types or tissues"/>
</dbReference>
<dbReference type="GO" id="GO:0008270">
    <property type="term" value="F:zinc ion binding"/>
    <property type="evidence" value="ECO:0007669"/>
    <property type="project" value="UniProtKB-KW"/>
</dbReference>
<dbReference type="GO" id="GO:0006915">
    <property type="term" value="P:apoptotic process"/>
    <property type="evidence" value="ECO:0007669"/>
    <property type="project" value="UniProtKB-KW"/>
</dbReference>
<dbReference type="GO" id="GO:0002119">
    <property type="term" value="P:nematode larval development"/>
    <property type="evidence" value="ECO:0000316"/>
    <property type="project" value="WormBase"/>
</dbReference>
<dbReference type="GO" id="GO:0040010">
    <property type="term" value="P:positive regulation of growth rate"/>
    <property type="evidence" value="ECO:0000316"/>
    <property type="project" value="WormBase"/>
</dbReference>
<dbReference type="GO" id="GO:0012501">
    <property type="term" value="P:programmed cell death"/>
    <property type="evidence" value="ECO:0000315"/>
    <property type="project" value="WormBase"/>
</dbReference>
<dbReference type="InterPro" id="IPR052797">
    <property type="entry name" value="RegFact_GeneExpr_CellDeath"/>
</dbReference>
<dbReference type="InterPro" id="IPR013087">
    <property type="entry name" value="Znf_C2H2_type"/>
</dbReference>
<dbReference type="PANTHER" id="PTHR33936:SF2">
    <property type="entry name" value="MODIFIER OF CELL DEATH"/>
    <property type="match status" value="1"/>
</dbReference>
<dbReference type="PANTHER" id="PTHR33936">
    <property type="entry name" value="PROTEIN CBG17840"/>
    <property type="match status" value="1"/>
</dbReference>
<dbReference type="PROSITE" id="PS00028">
    <property type="entry name" value="ZINC_FINGER_C2H2_1"/>
    <property type="match status" value="1"/>
</dbReference>
<dbReference type="PROSITE" id="PS50157">
    <property type="entry name" value="ZINC_FINGER_C2H2_2"/>
    <property type="match status" value="1"/>
</dbReference>
<proteinExistence type="evidence at protein level"/>
<feature type="chain" id="PRO_0000441014" description="Modifier of cell death" evidence="4">
    <location>
        <begin position="1"/>
        <end position="901"/>
    </location>
</feature>
<feature type="zinc finger region" description="C2H2-type" evidence="1">
    <location>
        <begin position="259"/>
        <end position="282"/>
    </location>
</feature>
<feature type="region of interest" description="Disordered" evidence="2">
    <location>
        <begin position="147"/>
        <end position="169"/>
    </location>
</feature>
<feature type="region of interest" description="Disordered" evidence="2">
    <location>
        <begin position="218"/>
        <end position="245"/>
    </location>
</feature>
<feature type="region of interest" description="Disordered" evidence="2">
    <location>
        <begin position="494"/>
        <end position="528"/>
    </location>
</feature>
<feature type="region of interest" description="Disordered" evidence="2">
    <location>
        <begin position="682"/>
        <end position="717"/>
    </location>
</feature>
<feature type="region of interest" description="Disordered" evidence="2">
    <location>
        <begin position="779"/>
        <end position="901"/>
    </location>
</feature>
<feature type="compositionally biased region" description="Low complexity" evidence="2">
    <location>
        <begin position="817"/>
        <end position="828"/>
    </location>
</feature>
<feature type="compositionally biased region" description="Acidic residues" evidence="2">
    <location>
        <begin position="829"/>
        <end position="840"/>
    </location>
</feature>
<feature type="compositionally biased region" description="Basic and acidic residues" evidence="2">
    <location>
        <begin position="846"/>
        <end position="866"/>
    </location>
</feature>
<feature type="splice variant" id="VSP_059021" description="In isoform b." evidence="4">
    <location>
        <begin position="1"/>
        <end position="642"/>
    </location>
</feature>
<feature type="mutagenesis site" description="In n3376; defective programmed cell death." evidence="3">
    <original>H</original>
    <variation>Y</variation>
    <location>
        <position position="277"/>
    </location>
</feature>
<accession>B7FAS0</accession>
<accession>B7FAS1</accession>
<reference evidence="5" key="1">
    <citation type="journal article" date="1998" name="Science">
        <title>Genome sequence of the nematode C. elegans: a platform for investigating biology.</title>
        <authorList>
            <consortium name="The C. elegans sequencing consortium"/>
        </authorList>
    </citation>
    <scope>NUCLEOTIDE SEQUENCE [LARGE SCALE GENOMIC DNA]</scope>
    <source>
        <strain evidence="5">Bristol N2</strain>
    </source>
</reference>
<reference evidence="4" key="2">
    <citation type="journal article" date="2007" name="Genetics">
        <title>DPL-1 DP, LIN-35 Rb and EFL-1 E2F act with the MCD-1 zinc-finger protein to promote programmed cell death in Caenorhabditis elegans.</title>
        <authorList>
            <person name="Reddien P.W."/>
            <person name="Andersen E.C."/>
            <person name="Huang M.C."/>
            <person name="Horvitz H.R."/>
        </authorList>
    </citation>
    <scope>FUNCTION</scope>
    <scope>DISRUPTION PHENOTYPE</scope>
    <scope>MUTAGENESIS OF HIS-277</scope>
</reference>
<comment type="function">
    <text evidence="3">Promotes programmed cell death. Its role in programmed cell death may be in conjunction with cell cycle regulatory factor efl-1 and the synthetic multivulva class B proteins dpl-1 and lin-35, and is independent of the ced-1, ced-8 and ced-9 pathways.</text>
</comment>
<comment type="alternative products">
    <event type="alternative splicing"/>
    <isoform>
        <id>B7FAS0-1</id>
        <name evidence="6">a</name>
        <sequence type="displayed"/>
    </isoform>
    <isoform>
        <id>B7FAS0-2</id>
        <name evidence="7">b</name>
        <sequence type="described" ref="VSP_059021"/>
    </isoform>
</comment>
<comment type="disruption phenotype">
    <text evidence="3">Enhances the cell death defect of ced-3(n2427) mutants. Double knockout with the synthetic multivulva (synMuv) class B proteins lin-9, lin-15B, lin-35 or lin-54 results in 100% lethality during the L1 stage of larval development. Double knockout with the synMuv class B protein lin-53 results in slow larval growth.</text>
</comment>
<evidence type="ECO:0000255" key="1">
    <source>
        <dbReference type="PROSITE-ProRule" id="PRU00042"/>
    </source>
</evidence>
<evidence type="ECO:0000256" key="2">
    <source>
        <dbReference type="SAM" id="MobiDB-lite"/>
    </source>
</evidence>
<evidence type="ECO:0000269" key="3">
    <source>
    </source>
</evidence>
<evidence type="ECO:0000305" key="4"/>
<evidence type="ECO:0000312" key="5">
    <source>
        <dbReference type="Proteomes" id="UP000001940"/>
    </source>
</evidence>
<evidence type="ECO:0000312" key="6">
    <source>
        <dbReference type="WormBase" id="Y51H1A.6a"/>
    </source>
</evidence>
<evidence type="ECO:0000312" key="7">
    <source>
        <dbReference type="WormBase" id="Y51H1A.6b"/>
    </source>
</evidence>
<keyword id="KW-0025">Alternative splicing</keyword>
<keyword id="KW-0053">Apoptosis</keyword>
<keyword id="KW-0479">Metal-binding</keyword>
<keyword id="KW-1185">Reference proteome</keyword>
<keyword id="KW-0862">Zinc</keyword>
<keyword id="KW-0863">Zinc-finger</keyword>
<organism evidence="5">
    <name type="scientific">Caenorhabditis elegans</name>
    <dbReference type="NCBI Taxonomy" id="6239"/>
    <lineage>
        <taxon>Eukaryota</taxon>
        <taxon>Metazoa</taxon>
        <taxon>Ecdysozoa</taxon>
        <taxon>Nematoda</taxon>
        <taxon>Chromadorea</taxon>
        <taxon>Rhabditida</taxon>
        <taxon>Rhabditina</taxon>
        <taxon>Rhabditomorpha</taxon>
        <taxon>Rhabditoidea</taxon>
        <taxon>Rhabditidae</taxon>
        <taxon>Peloderinae</taxon>
        <taxon>Caenorhabditis</taxon>
    </lineage>
</organism>
<sequence length="901" mass="102644">METAPDEAPTEFLEPGEEIVENVIEEEVVHEEDVEHHEEDGEMIEVQHEEVLEEIVEEDGMMFDTDGRVIEYSDVMVYEEGTEVIEEYVEVEDLGDGRYAYVMTDDIGHRRLLKPHEVEAVKKMPGMMEEEVVMDDEKAPNTSYAAAQKRGRFPPQARSSLSPQKPRAAGAYMGPEAYYQQPKRMTHMAKVDVEKYSPVTPVNRRPLMDNAIFKSKLPRKSAPWQEETAANGGPQSTSLIRSPSPMLKEPLFDDNEIRFKCAECGDGFPVMDRLCDHMIKQHDCQTNVREVQFFADRDFENFLLKVEKATLGRDPEDAIRKKSRAGSSQLFVCNYMNKGRQKMAELVEVGIVGLSERPLEVCTAFVQKTHGYECIRVKYCDQHIHYDGNIGFRVPIAVKRRLFEMSFKRLPIPCMQIMLGLEAEQLLPHPTRFEEKLKNLSHVEIIELLQIINASLRKHQEVEPRGKKVPIKFETIKSSEGSQTLMVKRVTPPKKEHMDYDEPDPNIPSTSAQALGYNPDDDEGDDVPMMSREEEVLDDETGEESVMTEDCDGMMEDNMLYDPENNRDPLFDELTEVELGVLDAYEHDIEIALTEAQKKERTRLKAKFALNKVIGIYQTLDTATHGLTAGELHTDTINHLRDMASYVVELVCQIDAEVKVRRNPALRIDDVKRDMIAGIAMQERVHQPERRPRRSAAPASPAKPQYRPQPPARSHEEYTQRIMNKVKEYMPRRRPDAYDLQQGQQQSRLQMLREQTLLRAPLEEEKPPVATMAPVPDEHKAIPWTRPGRKRAMGPGEAATAPAKRRGRPTKKEEAAEAAAKLIQAENEMVVEEEEVEEPPVVEQEQVPKEKEVEVAEAEKLPEQVKTEPSVTPSSAPPTPATTATKTRTGRVVKPKKWDDN</sequence>
<protein>
    <recommendedName>
        <fullName evidence="6">Modifier of cell death</fullName>
    </recommendedName>
</protein>